<proteinExistence type="inferred from homology"/>
<protein>
    <recommendedName>
        <fullName>Pre-mRNA-splicing factor PRP46</fullName>
    </recommendedName>
    <alternativeName>
        <fullName>Pre-mRNA-processing protein 46</fullName>
    </alternativeName>
</protein>
<accession>Q5A7Q3</accession>
<accession>A0A1D8PIY6</accession>
<dbReference type="EMBL" id="CP017625">
    <property type="protein sequence ID" value="AOW28100.1"/>
    <property type="molecule type" value="Genomic_DNA"/>
</dbReference>
<dbReference type="RefSeq" id="XP_717785.1">
    <property type="nucleotide sequence ID" value="XM_712692.1"/>
</dbReference>
<dbReference type="SMR" id="Q5A7Q3"/>
<dbReference type="FunCoup" id="Q5A7Q3">
    <property type="interactions" value="1021"/>
</dbReference>
<dbReference type="STRING" id="237561.Q5A7Q3"/>
<dbReference type="EnsemblFungi" id="C3_00500C_A-T">
    <property type="protein sequence ID" value="C3_00500C_A-T-p1"/>
    <property type="gene ID" value="C3_00500C_A"/>
</dbReference>
<dbReference type="GeneID" id="3640515"/>
<dbReference type="KEGG" id="cal:CAALFM_C300500CA"/>
<dbReference type="CGD" id="CAL0000199442">
    <property type="gene designation" value="orf19.12868"/>
</dbReference>
<dbReference type="VEuPathDB" id="FungiDB:C3_00500C_A"/>
<dbReference type="eggNOG" id="KOG0285">
    <property type="taxonomic scope" value="Eukaryota"/>
</dbReference>
<dbReference type="HOGENOM" id="CLU_000288_72_0_1"/>
<dbReference type="InParanoid" id="Q5A7Q3"/>
<dbReference type="OMA" id="FAMCFDQ"/>
<dbReference type="OrthoDB" id="10256122at2759"/>
<dbReference type="PRO" id="PR:Q5A7Q3"/>
<dbReference type="Proteomes" id="UP000000559">
    <property type="component" value="Chromosome 3"/>
</dbReference>
<dbReference type="GO" id="GO:0071013">
    <property type="term" value="C:catalytic step 2 spliceosome"/>
    <property type="evidence" value="ECO:0000318"/>
    <property type="project" value="GO_Central"/>
</dbReference>
<dbReference type="GO" id="GO:0005737">
    <property type="term" value="C:cytoplasm"/>
    <property type="evidence" value="ECO:0007669"/>
    <property type="project" value="UniProtKB-SubCell"/>
</dbReference>
<dbReference type="GO" id="GO:0071014">
    <property type="term" value="C:post-mRNA release spliceosomal complex"/>
    <property type="evidence" value="ECO:0007669"/>
    <property type="project" value="EnsemblFungi"/>
</dbReference>
<dbReference type="GO" id="GO:0000974">
    <property type="term" value="C:Prp19 complex"/>
    <property type="evidence" value="ECO:0000318"/>
    <property type="project" value="GO_Central"/>
</dbReference>
<dbReference type="GO" id="GO:0045292">
    <property type="term" value="P:mRNA cis splicing, via spliceosome"/>
    <property type="evidence" value="ECO:0007669"/>
    <property type="project" value="EnsemblFungi"/>
</dbReference>
<dbReference type="GO" id="GO:0000398">
    <property type="term" value="P:mRNA splicing, via spliceosome"/>
    <property type="evidence" value="ECO:0000318"/>
    <property type="project" value="GO_Central"/>
</dbReference>
<dbReference type="CDD" id="cd00200">
    <property type="entry name" value="WD40"/>
    <property type="match status" value="1"/>
</dbReference>
<dbReference type="FunFam" id="2.130.10.10:FF:000347">
    <property type="entry name" value="Pre-mRNA-splicing factor PRP46, putative"/>
    <property type="match status" value="1"/>
</dbReference>
<dbReference type="Gene3D" id="2.130.10.10">
    <property type="entry name" value="YVTN repeat-like/Quinoprotein amine dehydrogenase"/>
    <property type="match status" value="1"/>
</dbReference>
<dbReference type="InterPro" id="IPR020472">
    <property type="entry name" value="G-protein_beta_WD-40_rep"/>
</dbReference>
<dbReference type="InterPro" id="IPR045241">
    <property type="entry name" value="Prp46/PLRG1-like"/>
</dbReference>
<dbReference type="InterPro" id="IPR015943">
    <property type="entry name" value="WD40/YVTN_repeat-like_dom_sf"/>
</dbReference>
<dbReference type="InterPro" id="IPR019775">
    <property type="entry name" value="WD40_repeat_CS"/>
</dbReference>
<dbReference type="InterPro" id="IPR036322">
    <property type="entry name" value="WD40_repeat_dom_sf"/>
</dbReference>
<dbReference type="InterPro" id="IPR001680">
    <property type="entry name" value="WD40_rpt"/>
</dbReference>
<dbReference type="PANTHER" id="PTHR19923:SF0">
    <property type="entry name" value="PLEIOTROPIC REGULATOR 1"/>
    <property type="match status" value="1"/>
</dbReference>
<dbReference type="PANTHER" id="PTHR19923">
    <property type="entry name" value="WD40 REPEAT PROTEINPRL1/PRL2-RELATED"/>
    <property type="match status" value="1"/>
</dbReference>
<dbReference type="Pfam" id="PF00400">
    <property type="entry name" value="WD40"/>
    <property type="match status" value="6"/>
</dbReference>
<dbReference type="PRINTS" id="PR00320">
    <property type="entry name" value="GPROTEINBRPT"/>
</dbReference>
<dbReference type="SMART" id="SM00320">
    <property type="entry name" value="WD40"/>
    <property type="match status" value="7"/>
</dbReference>
<dbReference type="SUPFAM" id="SSF50978">
    <property type="entry name" value="WD40 repeat-like"/>
    <property type="match status" value="1"/>
</dbReference>
<dbReference type="PROSITE" id="PS00678">
    <property type="entry name" value="WD_REPEATS_1"/>
    <property type="match status" value="2"/>
</dbReference>
<dbReference type="PROSITE" id="PS50082">
    <property type="entry name" value="WD_REPEATS_2"/>
    <property type="match status" value="5"/>
</dbReference>
<dbReference type="PROSITE" id="PS50294">
    <property type="entry name" value="WD_REPEATS_REGION"/>
    <property type="match status" value="1"/>
</dbReference>
<sequence>MSVTATSHDILKSIDDSILPPEDTLSEAMYNNVKLDHYFNKLPKSSEENNINDQTNQLIVSAAPESEDSPAAEWKLLRTLAGAHQGWIRAIALDEITNKWYVTGSADSTIKIWDFENNSLKAVLTGHVLGIRSLCISKRHPYLFSGGEDKSLRCWDLERSNSDAGCQIRSYHGHLGGVYSIGLHPELDVLFSGGKDCVVRVWDIRSRVEAMTLLGHTNDITSIETDYNDPQVITSSMDGTIRLWDLRKSKTELLITNHSKSIRSMKSHPKEATFVSGDSNGEIKQWLLPKGELLNEFGTSQLSPNQRDNSRIINTLAINPVTNTLFSGYDDGKLEFYNYTTGNLQQSGQSPSLAGPEQSAIYASTFDMSGLRLLTCHGDKSIRIWGTSY</sequence>
<comment type="function">
    <text evidence="1">Involved in pre-mRNA splicing and required for cell cycle progression at G2/M.</text>
</comment>
<comment type="subunit">
    <text evidence="1">Associated with the spliceosome.</text>
</comment>
<comment type="subcellular location">
    <subcellularLocation>
        <location evidence="1">Cytoplasm</location>
    </subcellularLocation>
    <subcellularLocation>
        <location evidence="1">Nucleus</location>
    </subcellularLocation>
</comment>
<comment type="similarity">
    <text evidence="2">Belongs to the WD repeat PRL1/PRL2 family.</text>
</comment>
<organism>
    <name type="scientific">Candida albicans (strain SC5314 / ATCC MYA-2876)</name>
    <name type="common">Yeast</name>
    <dbReference type="NCBI Taxonomy" id="237561"/>
    <lineage>
        <taxon>Eukaryota</taxon>
        <taxon>Fungi</taxon>
        <taxon>Dikarya</taxon>
        <taxon>Ascomycota</taxon>
        <taxon>Saccharomycotina</taxon>
        <taxon>Pichiomycetes</taxon>
        <taxon>Debaryomycetaceae</taxon>
        <taxon>Candida/Lodderomyces clade</taxon>
        <taxon>Candida</taxon>
    </lineage>
</organism>
<keyword id="KW-0963">Cytoplasm</keyword>
<keyword id="KW-0507">mRNA processing</keyword>
<keyword id="KW-0508">mRNA splicing</keyword>
<keyword id="KW-0539">Nucleus</keyword>
<keyword id="KW-1185">Reference proteome</keyword>
<keyword id="KW-0677">Repeat</keyword>
<keyword id="KW-0747">Spliceosome</keyword>
<keyword id="KW-0853">WD repeat</keyword>
<name>PRP46_CANAL</name>
<feature type="chain" id="PRO_0000051161" description="Pre-mRNA-splicing factor PRP46">
    <location>
        <begin position="1"/>
        <end position="389"/>
    </location>
</feature>
<feature type="repeat" description="WD 1">
    <location>
        <begin position="83"/>
        <end position="123"/>
    </location>
</feature>
<feature type="repeat" description="WD 2">
    <location>
        <begin position="126"/>
        <end position="165"/>
    </location>
</feature>
<feature type="repeat" description="WD 3">
    <location>
        <begin position="173"/>
        <end position="212"/>
    </location>
</feature>
<feature type="repeat" description="WD 4">
    <location>
        <begin position="215"/>
        <end position="254"/>
    </location>
</feature>
<feature type="repeat" description="WD 5">
    <location>
        <begin position="257"/>
        <end position="298"/>
    </location>
</feature>
<feature type="repeat" description="WD 6">
    <location>
        <begin position="308"/>
        <end position="347"/>
    </location>
</feature>
<feature type="repeat" description="WD 7">
    <location>
        <begin position="356"/>
        <end position="389"/>
    </location>
</feature>
<evidence type="ECO:0000250" key="1"/>
<evidence type="ECO:0000305" key="2"/>
<gene>
    <name type="primary">PRP46</name>
    <name type="ordered locus">CAALFM_C300500CA</name>
    <name type="ORF">CaO19.12868</name>
    <name type="ORF">CaO19.5413</name>
</gene>
<reference key="1">
    <citation type="journal article" date="2004" name="Proc. Natl. Acad. Sci. U.S.A.">
        <title>The diploid genome sequence of Candida albicans.</title>
        <authorList>
            <person name="Jones T."/>
            <person name="Federspiel N.A."/>
            <person name="Chibana H."/>
            <person name="Dungan J."/>
            <person name="Kalman S."/>
            <person name="Magee B.B."/>
            <person name="Newport G."/>
            <person name="Thorstenson Y.R."/>
            <person name="Agabian N."/>
            <person name="Magee P.T."/>
            <person name="Davis R.W."/>
            <person name="Scherer S."/>
        </authorList>
    </citation>
    <scope>NUCLEOTIDE SEQUENCE [LARGE SCALE GENOMIC DNA]</scope>
    <source>
        <strain>SC5314 / ATCC MYA-2876</strain>
    </source>
</reference>
<reference key="2">
    <citation type="journal article" date="2007" name="Genome Biol.">
        <title>Assembly of the Candida albicans genome into sixteen supercontigs aligned on the eight chromosomes.</title>
        <authorList>
            <person name="van het Hoog M."/>
            <person name="Rast T.J."/>
            <person name="Martchenko M."/>
            <person name="Grindle S."/>
            <person name="Dignard D."/>
            <person name="Hogues H."/>
            <person name="Cuomo C."/>
            <person name="Berriman M."/>
            <person name="Scherer S."/>
            <person name="Magee B.B."/>
            <person name="Whiteway M."/>
            <person name="Chibana H."/>
            <person name="Nantel A."/>
            <person name="Magee P.T."/>
        </authorList>
    </citation>
    <scope>GENOME REANNOTATION</scope>
    <source>
        <strain>SC5314 / ATCC MYA-2876</strain>
    </source>
</reference>
<reference key="3">
    <citation type="journal article" date="2013" name="Genome Biol.">
        <title>Assembly of a phased diploid Candida albicans genome facilitates allele-specific measurements and provides a simple model for repeat and indel structure.</title>
        <authorList>
            <person name="Muzzey D."/>
            <person name="Schwartz K."/>
            <person name="Weissman J.S."/>
            <person name="Sherlock G."/>
        </authorList>
    </citation>
    <scope>NUCLEOTIDE SEQUENCE [LARGE SCALE GENOMIC DNA]</scope>
    <scope>GENOME REANNOTATION</scope>
    <source>
        <strain>SC5314 / ATCC MYA-2876</strain>
    </source>
</reference>